<comment type="function">
    <text evidence="1">The alpha subunit is responsible for the aldol cleavage of indoleglycerol phosphate to indole and glyceraldehyde 3-phosphate.</text>
</comment>
<comment type="catalytic activity">
    <reaction evidence="1">
        <text>(1S,2R)-1-C-(indol-3-yl)glycerol 3-phosphate + L-serine = D-glyceraldehyde 3-phosphate + L-tryptophan + H2O</text>
        <dbReference type="Rhea" id="RHEA:10532"/>
        <dbReference type="ChEBI" id="CHEBI:15377"/>
        <dbReference type="ChEBI" id="CHEBI:33384"/>
        <dbReference type="ChEBI" id="CHEBI:57912"/>
        <dbReference type="ChEBI" id="CHEBI:58866"/>
        <dbReference type="ChEBI" id="CHEBI:59776"/>
        <dbReference type="EC" id="4.2.1.20"/>
    </reaction>
</comment>
<comment type="pathway">
    <text evidence="1">Amino-acid biosynthesis; L-tryptophan biosynthesis; L-tryptophan from chorismate: step 5/5.</text>
</comment>
<comment type="subunit">
    <text evidence="1">Tetramer of two alpha and two beta chains.</text>
</comment>
<comment type="similarity">
    <text evidence="1">Belongs to the TrpA family.</text>
</comment>
<accession>C1CG41</accession>
<evidence type="ECO:0000255" key="1">
    <source>
        <dbReference type="HAMAP-Rule" id="MF_00131"/>
    </source>
</evidence>
<gene>
    <name evidence="1" type="primary">trpA</name>
    <name type="ordered locus">SPJ_1719</name>
</gene>
<name>TRPA_STRZJ</name>
<feature type="chain" id="PRO_1000198727" description="Tryptophan synthase alpha chain">
    <location>
        <begin position="1"/>
        <end position="258"/>
    </location>
</feature>
<feature type="active site" description="Proton acceptor" evidence="1">
    <location>
        <position position="52"/>
    </location>
</feature>
<feature type="active site" description="Proton acceptor" evidence="1">
    <location>
        <position position="63"/>
    </location>
</feature>
<proteinExistence type="inferred from homology"/>
<sequence length="258" mass="27684">MPKTLTEKLNAIKAAGKGIFVPYIMAGDHEKGLDGLGETIHFLEDLGVSAIEVGIPFSDPVADGPVIEEAGLRSLAHGTSTQALVETLKTIETEIPLVIMTYFNPLFQYGVENFVKDLADTAVKGLIIPDLPHEHANFVEPFLADTDIALIPLVSLTTGIERQKELIEGAEGFVYAVAINGVTGKSGNYRADLDKHLAQLHQVADIPVLTGFGVSSQADLERFNAVSDGVIVGSKIVKALHQGEPIQDFIKQAVAYQK</sequence>
<organism>
    <name type="scientific">Streptococcus pneumoniae (strain JJA)</name>
    <dbReference type="NCBI Taxonomy" id="488222"/>
    <lineage>
        <taxon>Bacteria</taxon>
        <taxon>Bacillati</taxon>
        <taxon>Bacillota</taxon>
        <taxon>Bacilli</taxon>
        <taxon>Lactobacillales</taxon>
        <taxon>Streptococcaceae</taxon>
        <taxon>Streptococcus</taxon>
    </lineage>
</organism>
<protein>
    <recommendedName>
        <fullName evidence="1">Tryptophan synthase alpha chain</fullName>
        <ecNumber evidence="1">4.2.1.20</ecNumber>
    </recommendedName>
</protein>
<dbReference type="EC" id="4.2.1.20" evidence="1"/>
<dbReference type="EMBL" id="CP000919">
    <property type="protein sequence ID" value="ACO19880.1"/>
    <property type="molecule type" value="Genomic_DNA"/>
</dbReference>
<dbReference type="RefSeq" id="WP_001127010.1">
    <property type="nucleotide sequence ID" value="NC_012466.1"/>
</dbReference>
<dbReference type="SMR" id="C1CG41"/>
<dbReference type="KEGG" id="sjj:SPJ_1719"/>
<dbReference type="HOGENOM" id="CLU_016734_0_0_9"/>
<dbReference type="UniPathway" id="UPA00035">
    <property type="reaction ID" value="UER00044"/>
</dbReference>
<dbReference type="Proteomes" id="UP000002206">
    <property type="component" value="Chromosome"/>
</dbReference>
<dbReference type="GO" id="GO:0005829">
    <property type="term" value="C:cytosol"/>
    <property type="evidence" value="ECO:0007669"/>
    <property type="project" value="TreeGrafter"/>
</dbReference>
<dbReference type="GO" id="GO:0004834">
    <property type="term" value="F:tryptophan synthase activity"/>
    <property type="evidence" value="ECO:0007669"/>
    <property type="project" value="UniProtKB-UniRule"/>
</dbReference>
<dbReference type="CDD" id="cd04724">
    <property type="entry name" value="Tryptophan_synthase_alpha"/>
    <property type="match status" value="1"/>
</dbReference>
<dbReference type="Gene3D" id="3.20.20.70">
    <property type="entry name" value="Aldolase class I"/>
    <property type="match status" value="1"/>
</dbReference>
<dbReference type="HAMAP" id="MF_00131">
    <property type="entry name" value="Trp_synth_alpha"/>
    <property type="match status" value="1"/>
</dbReference>
<dbReference type="InterPro" id="IPR013785">
    <property type="entry name" value="Aldolase_TIM"/>
</dbReference>
<dbReference type="InterPro" id="IPR011060">
    <property type="entry name" value="RibuloseP-bd_barrel"/>
</dbReference>
<dbReference type="InterPro" id="IPR018204">
    <property type="entry name" value="Trp_synthase_alpha_AS"/>
</dbReference>
<dbReference type="InterPro" id="IPR002028">
    <property type="entry name" value="Trp_synthase_suA"/>
</dbReference>
<dbReference type="NCBIfam" id="TIGR00262">
    <property type="entry name" value="trpA"/>
    <property type="match status" value="1"/>
</dbReference>
<dbReference type="PANTHER" id="PTHR43406:SF1">
    <property type="entry name" value="TRYPTOPHAN SYNTHASE ALPHA CHAIN, CHLOROPLASTIC"/>
    <property type="match status" value="1"/>
</dbReference>
<dbReference type="PANTHER" id="PTHR43406">
    <property type="entry name" value="TRYPTOPHAN SYNTHASE, ALPHA CHAIN"/>
    <property type="match status" value="1"/>
</dbReference>
<dbReference type="Pfam" id="PF00290">
    <property type="entry name" value="Trp_syntA"/>
    <property type="match status" value="1"/>
</dbReference>
<dbReference type="SUPFAM" id="SSF51366">
    <property type="entry name" value="Ribulose-phoshate binding barrel"/>
    <property type="match status" value="1"/>
</dbReference>
<dbReference type="PROSITE" id="PS00167">
    <property type="entry name" value="TRP_SYNTHASE_ALPHA"/>
    <property type="match status" value="1"/>
</dbReference>
<keyword id="KW-0028">Amino-acid biosynthesis</keyword>
<keyword id="KW-0057">Aromatic amino acid biosynthesis</keyword>
<keyword id="KW-0456">Lyase</keyword>
<keyword id="KW-0822">Tryptophan biosynthesis</keyword>
<reference key="1">
    <citation type="journal article" date="2010" name="Genome Biol.">
        <title>Structure and dynamics of the pan-genome of Streptococcus pneumoniae and closely related species.</title>
        <authorList>
            <person name="Donati C."/>
            <person name="Hiller N.L."/>
            <person name="Tettelin H."/>
            <person name="Muzzi A."/>
            <person name="Croucher N.J."/>
            <person name="Angiuoli S.V."/>
            <person name="Oggioni M."/>
            <person name="Dunning Hotopp J.C."/>
            <person name="Hu F.Z."/>
            <person name="Riley D.R."/>
            <person name="Covacci A."/>
            <person name="Mitchell T.J."/>
            <person name="Bentley S.D."/>
            <person name="Kilian M."/>
            <person name="Ehrlich G.D."/>
            <person name="Rappuoli R."/>
            <person name="Moxon E.R."/>
            <person name="Masignani V."/>
        </authorList>
    </citation>
    <scope>NUCLEOTIDE SEQUENCE [LARGE SCALE GENOMIC DNA]</scope>
    <source>
        <strain>JJA</strain>
    </source>
</reference>